<accession>Q9Y5I1</accession>
<accession>B2RN58</accession>
<accession>O75279</accession>
<dbReference type="EMBL" id="AF152307">
    <property type="protein sequence ID" value="AAD43701.1"/>
    <property type="molecule type" value="mRNA"/>
</dbReference>
<dbReference type="EMBL" id="AF152476">
    <property type="protein sequence ID" value="AAD43737.1"/>
    <property type="molecule type" value="mRNA"/>
</dbReference>
<dbReference type="EMBL" id="AJ007609">
    <property type="protein sequence ID" value="CAC22256.1"/>
    <property type="molecule type" value="mRNA"/>
</dbReference>
<dbReference type="EMBL" id="AC005609">
    <property type="protein sequence ID" value="AAC34316.1"/>
    <property type="molecule type" value="Genomic_DNA"/>
</dbReference>
<dbReference type="EMBL" id="CH471062">
    <property type="protein sequence ID" value="EAW61995.1"/>
    <property type="molecule type" value="Genomic_DNA"/>
</dbReference>
<dbReference type="EMBL" id="BC136706">
    <property type="protein sequence ID" value="AAI36707.1"/>
    <property type="molecule type" value="mRNA"/>
</dbReference>
<dbReference type="CCDS" id="CCDS47284.1">
    <molecule id="Q9Y5I1-1"/>
</dbReference>
<dbReference type="CCDS" id="CCDS75326.1">
    <molecule id="Q9Y5I1-2"/>
</dbReference>
<dbReference type="RefSeq" id="NP_061725.1">
    <molecule id="Q9Y5I1-1"/>
    <property type="nucleotide sequence ID" value="NM_018902.5"/>
</dbReference>
<dbReference type="RefSeq" id="NP_114067.1">
    <molecule id="Q9Y5I1-2"/>
    <property type="nucleotide sequence ID" value="NM_031861.3"/>
</dbReference>
<dbReference type="SMR" id="Q9Y5I1"/>
<dbReference type="BioGRID" id="121078">
    <property type="interactions" value="19"/>
</dbReference>
<dbReference type="FunCoup" id="Q9Y5I1">
    <property type="interactions" value="73"/>
</dbReference>
<dbReference type="IntAct" id="Q9Y5I1">
    <property type="interactions" value="19"/>
</dbReference>
<dbReference type="STRING" id="9606.ENSP00000381636"/>
<dbReference type="GlyCosmos" id="Q9Y5I1">
    <property type="glycosylation" value="3 sites, No reported glycans"/>
</dbReference>
<dbReference type="GlyGen" id="Q9Y5I1">
    <property type="glycosylation" value="3 sites, 1 N-linked glycan (1 site)"/>
</dbReference>
<dbReference type="iPTMnet" id="Q9Y5I1"/>
<dbReference type="PhosphoSitePlus" id="Q9Y5I1"/>
<dbReference type="BioMuta" id="PCDHA11"/>
<dbReference type="DMDM" id="13878432"/>
<dbReference type="jPOST" id="Q9Y5I1"/>
<dbReference type="MassIVE" id="Q9Y5I1"/>
<dbReference type="PaxDb" id="9606-ENSP00000381636"/>
<dbReference type="PeptideAtlas" id="Q9Y5I1"/>
<dbReference type="ProteomicsDB" id="86406">
    <molecule id="Q9Y5I1-1"/>
</dbReference>
<dbReference type="ProteomicsDB" id="86407">
    <molecule id="Q9Y5I1-2"/>
</dbReference>
<dbReference type="Antibodypedia" id="57357">
    <property type="antibodies" value="38 antibodies from 11 providers"/>
</dbReference>
<dbReference type="DNASU" id="56138"/>
<dbReference type="Ensembl" id="ENST00000398640.7">
    <molecule id="Q9Y5I1-1"/>
    <property type="protein sequence ID" value="ENSP00000381636.3"/>
    <property type="gene ID" value="ENSG00000249158.7"/>
</dbReference>
<dbReference type="Ensembl" id="ENST00000616325.1">
    <molecule id="Q9Y5I1-2"/>
    <property type="protein sequence ID" value="ENSP00000482503.1"/>
    <property type="gene ID" value="ENSG00000249158.7"/>
</dbReference>
<dbReference type="Ensembl" id="ENST00000708317.1">
    <molecule id="Q9Y5I1-2"/>
    <property type="protein sequence ID" value="ENSP00000517165.1"/>
    <property type="gene ID" value="ENSG00000291662.1"/>
</dbReference>
<dbReference type="Ensembl" id="ENST00000708318.1">
    <molecule id="Q9Y5I1-1"/>
    <property type="protein sequence ID" value="ENSP00000517166.1"/>
    <property type="gene ID" value="ENSG00000291662.1"/>
</dbReference>
<dbReference type="GeneID" id="56138"/>
<dbReference type="KEGG" id="hsa:56138"/>
<dbReference type="MANE-Select" id="ENST00000398640.7">
    <property type="protein sequence ID" value="ENSP00000381636.3"/>
    <property type="RefSeq nucleotide sequence ID" value="NM_018902.5"/>
    <property type="RefSeq protein sequence ID" value="NP_061725.1"/>
</dbReference>
<dbReference type="UCSC" id="uc003lia.4">
    <molecule id="Q9Y5I1-1"/>
    <property type="organism name" value="human"/>
</dbReference>
<dbReference type="AGR" id="HGNC:8665"/>
<dbReference type="CTD" id="56138"/>
<dbReference type="DisGeNET" id="56138"/>
<dbReference type="GeneCards" id="PCDHA11"/>
<dbReference type="HGNC" id="HGNC:8665">
    <property type="gene designation" value="PCDHA11"/>
</dbReference>
<dbReference type="HPA" id="ENSG00000249158">
    <property type="expression patterns" value="Tissue enhanced (brain, parathyroid gland, retina)"/>
</dbReference>
<dbReference type="MIM" id="604966">
    <property type="type" value="gene"/>
</dbReference>
<dbReference type="MIM" id="606317">
    <property type="type" value="gene"/>
</dbReference>
<dbReference type="neXtProt" id="NX_Q9Y5I1"/>
<dbReference type="OpenTargets" id="ENSG00000249158"/>
<dbReference type="PharmGKB" id="PA33011"/>
<dbReference type="VEuPathDB" id="HostDB:ENSG00000249158"/>
<dbReference type="eggNOG" id="KOG3594">
    <property type="taxonomic scope" value="Eukaryota"/>
</dbReference>
<dbReference type="GeneTree" id="ENSGT00940000164882"/>
<dbReference type="HOGENOM" id="CLU_006480_0_1_1"/>
<dbReference type="InParanoid" id="Q9Y5I1"/>
<dbReference type="OMA" id="MLGFQRR"/>
<dbReference type="OrthoDB" id="6252479at2759"/>
<dbReference type="PAN-GO" id="Q9Y5I1">
    <property type="GO annotations" value="2 GO annotations based on evolutionary models"/>
</dbReference>
<dbReference type="PhylomeDB" id="Q9Y5I1"/>
<dbReference type="TreeFam" id="TF332299"/>
<dbReference type="PathwayCommons" id="Q9Y5I1"/>
<dbReference type="SignaLink" id="Q9Y5I1"/>
<dbReference type="SIGNOR" id="Q9Y5I1"/>
<dbReference type="BioGRID-ORCS" id="56138">
    <property type="hits" value="6 hits in 1098 CRISPR screens"/>
</dbReference>
<dbReference type="ChiTaRS" id="PCDHA11">
    <property type="organism name" value="human"/>
</dbReference>
<dbReference type="GenomeRNAi" id="56138"/>
<dbReference type="Pharos" id="Q9Y5I1">
    <property type="development level" value="Tdark"/>
</dbReference>
<dbReference type="PRO" id="PR:Q9Y5I1"/>
<dbReference type="Proteomes" id="UP000005640">
    <property type="component" value="Chromosome 5"/>
</dbReference>
<dbReference type="RNAct" id="Q9Y5I1">
    <property type="molecule type" value="protein"/>
</dbReference>
<dbReference type="Bgee" id="ENSG00000249158">
    <property type="expression patterns" value="Expressed in male germ line stem cell (sensu Vertebrata) in testis and 85 other cell types or tissues"/>
</dbReference>
<dbReference type="ExpressionAtlas" id="Q9Y5I1">
    <property type="expression patterns" value="baseline and differential"/>
</dbReference>
<dbReference type="GO" id="GO:0005886">
    <property type="term" value="C:plasma membrane"/>
    <property type="evidence" value="ECO:0000318"/>
    <property type="project" value="GO_Central"/>
</dbReference>
<dbReference type="GO" id="GO:0005509">
    <property type="term" value="F:calcium ion binding"/>
    <property type="evidence" value="ECO:0007669"/>
    <property type="project" value="InterPro"/>
</dbReference>
<dbReference type="GO" id="GO:0007155">
    <property type="term" value="P:cell adhesion"/>
    <property type="evidence" value="ECO:0000318"/>
    <property type="project" value="GO_Central"/>
</dbReference>
<dbReference type="GO" id="GO:0007156">
    <property type="term" value="P:homophilic cell adhesion via plasma membrane adhesion molecules"/>
    <property type="evidence" value="ECO:0007669"/>
    <property type="project" value="InterPro"/>
</dbReference>
<dbReference type="GO" id="GO:0007399">
    <property type="term" value="P:nervous system development"/>
    <property type="evidence" value="ECO:0000304"/>
    <property type="project" value="ProtInc"/>
</dbReference>
<dbReference type="CDD" id="cd11304">
    <property type="entry name" value="Cadherin_repeat"/>
    <property type="match status" value="6"/>
</dbReference>
<dbReference type="FunFam" id="2.60.40.60:FF:000001">
    <property type="entry name" value="Protocadherin alpha 2"/>
    <property type="match status" value="1"/>
</dbReference>
<dbReference type="FunFam" id="2.60.40.60:FF:000002">
    <property type="entry name" value="Protocadherin alpha 2"/>
    <property type="match status" value="1"/>
</dbReference>
<dbReference type="FunFam" id="2.60.40.60:FF:000003">
    <property type="entry name" value="Protocadherin alpha 2"/>
    <property type="match status" value="1"/>
</dbReference>
<dbReference type="FunFam" id="2.60.40.60:FF:000006">
    <property type="entry name" value="Protocadherin alpha 2"/>
    <property type="match status" value="1"/>
</dbReference>
<dbReference type="FunFam" id="2.60.40.60:FF:000007">
    <property type="entry name" value="Protocadherin alpha 2"/>
    <property type="match status" value="1"/>
</dbReference>
<dbReference type="FunFam" id="2.60.40.60:FF:000076">
    <property type="entry name" value="Protocadherin alpha 2"/>
    <property type="match status" value="1"/>
</dbReference>
<dbReference type="Gene3D" id="2.60.40.60">
    <property type="entry name" value="Cadherins"/>
    <property type="match status" value="6"/>
</dbReference>
<dbReference type="InterPro" id="IPR002126">
    <property type="entry name" value="Cadherin-like_dom"/>
</dbReference>
<dbReference type="InterPro" id="IPR015919">
    <property type="entry name" value="Cadherin-like_sf"/>
</dbReference>
<dbReference type="InterPro" id="IPR031904">
    <property type="entry name" value="Cadherin_CBD"/>
</dbReference>
<dbReference type="InterPro" id="IPR020894">
    <property type="entry name" value="Cadherin_CS"/>
</dbReference>
<dbReference type="InterPro" id="IPR013164">
    <property type="entry name" value="Cadherin_N"/>
</dbReference>
<dbReference type="InterPro" id="IPR050174">
    <property type="entry name" value="Protocadherin/Cadherin-CA"/>
</dbReference>
<dbReference type="PANTHER" id="PTHR24028">
    <property type="entry name" value="CADHERIN-87A"/>
    <property type="match status" value="1"/>
</dbReference>
<dbReference type="PANTHER" id="PTHR24028:SF68">
    <property type="entry name" value="PROTOCADHERIN ALPHA-11"/>
    <property type="match status" value="1"/>
</dbReference>
<dbReference type="Pfam" id="PF00028">
    <property type="entry name" value="Cadherin"/>
    <property type="match status" value="5"/>
</dbReference>
<dbReference type="Pfam" id="PF08266">
    <property type="entry name" value="Cadherin_2"/>
    <property type="match status" value="1"/>
</dbReference>
<dbReference type="Pfam" id="PF15974">
    <property type="entry name" value="Cadherin_tail"/>
    <property type="match status" value="1"/>
</dbReference>
<dbReference type="PRINTS" id="PR00205">
    <property type="entry name" value="CADHERIN"/>
</dbReference>
<dbReference type="SMART" id="SM00112">
    <property type="entry name" value="CA"/>
    <property type="match status" value="6"/>
</dbReference>
<dbReference type="SUPFAM" id="SSF49313">
    <property type="entry name" value="Cadherin-like"/>
    <property type="match status" value="6"/>
</dbReference>
<dbReference type="PROSITE" id="PS00232">
    <property type="entry name" value="CADHERIN_1"/>
    <property type="match status" value="5"/>
</dbReference>
<dbReference type="PROSITE" id="PS50268">
    <property type="entry name" value="CADHERIN_2"/>
    <property type="match status" value="6"/>
</dbReference>
<proteinExistence type="evidence at protein level"/>
<sequence length="949" mass="103298">MFGFQRRGLGTPRLQLWLLLLEFWEVGSGQLHYSVSEEAKHGTFVGRIAQDLGLELAELVQRLFRVASKTHGDLLEVNLQNGILFVNSRIDREELCGQSAECSIHLEVIVDRPLQVFHVNVEVKDINDNPPVFSLREQKLLIAESKQSDSRFPLEGASDADIEENALLTYRLSKNEYFSLDSPTNGKQIKRLSLILKKSLDREKTPELNLLLTATDGGKPELTGTVRLLVQVLDVNDNDPEFDKSEYKVSLMENAAKETLVLKLNATDRDEGVNGEVTYSLMSIKPNGRHLFTLDQNNGEVRVNGTLDYEENKFYKIEVQATDKGTPPMAGHCTVWVEILDTNDNSPEVAVTSLSLPVREDAQPSTVIALISVSDRDSGVNGQVTCSLTPHVPFKLVSTFKNYYSLVLDSALDRENVWAYELVVTARDGGSPSLWATARVSVEVADVNDNAPAFAQPEYTVFVKENNPPGCHIFTVSARDADAQENALVSYSLVERRLGDRALSSYVSVHAESGKVYALQPLDHEELELLQFQVSARDAGVPPLSSNVTLQVFVLDENDNAPALLATQAGSAGGAVNKLVPRSVGAGHVVAKVRAVDADSGYNAWLSYELQPAAGGSRIPFRVGLYTGEISTTRALDEADSPRHRLLVLVKDHGEPALTATATVLVSLVESGQAPKASSRTLAGAASPEAALVDVNVYLIIAICVVSSLLVLTLLLYTALWWSATPTEGACAPGKPTLVCSRAVGSWSYSQQRRQRVCSEEGPPKTDLMAFSPSLPLGLNKEEEGERQEPGSNHPGQPRQPNPDWRYSASLRAGMHSSVHLEEAGILRAGPGGPDQQWPTVSSATPEPEAGEVSPPVGAGVNSNSWTFKYGPGNPKQSGPGELPDKFIIPGSPAIISIRQEPTNSQIDKSDFITFGKKEETKKKKKKKKGNKTQEKKEKGNSTTDNSDQ</sequence>
<keyword id="KW-0025">Alternative splicing</keyword>
<keyword id="KW-0106">Calcium</keyword>
<keyword id="KW-0130">Cell adhesion</keyword>
<keyword id="KW-1003">Cell membrane</keyword>
<keyword id="KW-0325">Glycoprotein</keyword>
<keyword id="KW-0472">Membrane</keyword>
<keyword id="KW-1267">Proteomics identification</keyword>
<keyword id="KW-1185">Reference proteome</keyword>
<keyword id="KW-0677">Repeat</keyword>
<keyword id="KW-0732">Signal</keyword>
<keyword id="KW-0812">Transmembrane</keyword>
<keyword id="KW-1133">Transmembrane helix</keyword>
<evidence type="ECO:0000250" key="1"/>
<evidence type="ECO:0000255" key="2"/>
<evidence type="ECO:0000255" key="3">
    <source>
        <dbReference type="PROSITE-ProRule" id="PRU00043"/>
    </source>
</evidence>
<evidence type="ECO:0000256" key="4">
    <source>
        <dbReference type="SAM" id="MobiDB-lite"/>
    </source>
</evidence>
<evidence type="ECO:0000303" key="5">
    <source>
    </source>
</evidence>
<evidence type="ECO:0000303" key="6">
    <source>
    </source>
</evidence>
<name>PCDAB_HUMAN</name>
<comment type="function">
    <text>Potential calcium-dependent cell-adhesion protein. May be involved in the establishment and maintenance of specific neuronal connections in the brain.</text>
</comment>
<comment type="subcellular location">
    <subcellularLocation>
        <location evidence="1">Cell membrane</location>
        <topology evidence="1">Single-pass type I membrane protein</topology>
    </subcellularLocation>
</comment>
<comment type="alternative products">
    <event type="alternative splicing"/>
    <isoform>
        <id>Q9Y5I1-1</id>
        <name>1</name>
        <sequence type="displayed"/>
    </isoform>
    <isoform>
        <id>Q9Y5I1-2</id>
        <name>2</name>
        <sequence type="described" ref="VSP_000693 VSP_000694"/>
    </isoform>
</comment>
<feature type="signal peptide" evidence="2">
    <location>
        <begin position="1"/>
        <end position="29"/>
    </location>
</feature>
<feature type="chain" id="PRO_0000003904" description="Protocadherin alpha-11">
    <location>
        <begin position="30"/>
        <end position="949"/>
    </location>
</feature>
<feature type="topological domain" description="Extracellular" evidence="2">
    <location>
        <begin position="30"/>
        <end position="696"/>
    </location>
</feature>
<feature type="transmembrane region" description="Helical" evidence="2">
    <location>
        <begin position="697"/>
        <end position="717"/>
    </location>
</feature>
<feature type="topological domain" description="Cytoplasmic" evidence="2">
    <location>
        <begin position="718"/>
        <end position="949"/>
    </location>
</feature>
<feature type="domain" description="Cadherin 1" evidence="3">
    <location>
        <begin position="30"/>
        <end position="133"/>
    </location>
</feature>
<feature type="domain" description="Cadherin 2" evidence="3">
    <location>
        <begin position="157"/>
        <end position="242"/>
    </location>
</feature>
<feature type="domain" description="Cadherin 3" evidence="3">
    <location>
        <begin position="243"/>
        <end position="349"/>
    </location>
</feature>
<feature type="domain" description="Cadherin 4" evidence="3">
    <location>
        <begin position="350"/>
        <end position="454"/>
    </location>
</feature>
<feature type="domain" description="Cadherin 5" evidence="3">
    <location>
        <begin position="455"/>
        <end position="564"/>
    </location>
</feature>
<feature type="domain" description="Cadherin 6" evidence="3">
    <location>
        <begin position="580"/>
        <end position="677"/>
    </location>
</feature>
<feature type="repeat" description="PXXP 1">
    <location>
        <begin position="733"/>
        <end position="736"/>
    </location>
</feature>
<feature type="repeat" description="PXXP 2">
    <location>
        <begin position="773"/>
        <end position="776"/>
    </location>
</feature>
<feature type="repeat" description="PXXP 3">
    <location>
        <begin position="795"/>
        <end position="798"/>
    </location>
</feature>
<feature type="repeat" description="PXXP 4">
    <location>
        <begin position="831"/>
        <end position="834"/>
    </location>
</feature>
<feature type="repeat" description="PXXP 5">
    <location>
        <begin position="872"/>
        <end position="875"/>
    </location>
</feature>
<feature type="repeat" description="PXXP 6">
    <location>
        <begin position="890"/>
        <end position="893"/>
    </location>
</feature>
<feature type="region of interest" description="6 X 4 AA repeats of P-X-X-P">
    <location>
        <begin position="733"/>
        <end position="893"/>
    </location>
</feature>
<feature type="region of interest" description="Disordered" evidence="4">
    <location>
        <begin position="753"/>
        <end position="807"/>
    </location>
</feature>
<feature type="region of interest" description="Disordered" evidence="4">
    <location>
        <begin position="826"/>
        <end position="949"/>
    </location>
</feature>
<feature type="compositionally biased region" description="Basic and acidic residues" evidence="4">
    <location>
        <begin position="780"/>
        <end position="789"/>
    </location>
</feature>
<feature type="compositionally biased region" description="Basic and acidic residues" evidence="4">
    <location>
        <begin position="908"/>
        <end position="922"/>
    </location>
</feature>
<feature type="glycosylation site" description="N-linked (GlcNAc...) asparagine" evidence="2">
    <location>
        <position position="265"/>
    </location>
</feature>
<feature type="glycosylation site" description="N-linked (GlcNAc...) asparagine" evidence="2">
    <location>
        <position position="304"/>
    </location>
</feature>
<feature type="glycosylation site" description="N-linked (GlcNAc...) asparagine" evidence="2">
    <location>
        <position position="547"/>
    </location>
</feature>
<feature type="splice variant" id="VSP_000693" description="In isoform 2." evidence="5 6">
    <original>PRQPNPDWRYSAS</original>
    <variation>VSFLQIPPIRKCM</variation>
    <location>
        <begin position="798"/>
        <end position="810"/>
    </location>
</feature>
<feature type="splice variant" id="VSP_000694" description="In isoform 2." evidence="5 6">
    <location>
        <begin position="811"/>
        <end position="949"/>
    </location>
</feature>
<feature type="sequence variant" id="VAR_048538" description="In dbSNP:rs10071369.">
    <original>S</original>
    <variation>Y</variation>
    <location>
        <position position="199"/>
    </location>
</feature>
<feature type="sequence variant" id="VAR_048539" description="In dbSNP:rs17119218.">
    <original>W</original>
    <variation>S</variation>
    <location>
        <position position="418"/>
    </location>
</feature>
<gene>
    <name type="primary">PCDHA11</name>
    <name type="synonym">CNRS7</name>
</gene>
<protein>
    <recommendedName>
        <fullName>Protocadherin alpha-11</fullName>
        <shortName>PCDH-alpha-11</shortName>
    </recommendedName>
</protein>
<reference key="1">
    <citation type="journal article" date="1999" name="Cell">
        <title>A striking organization of a large family of human neural cadherin-like cell adhesion genes.</title>
        <authorList>
            <person name="Wu Q."/>
            <person name="Maniatis T."/>
        </authorList>
    </citation>
    <scope>NUCLEOTIDE SEQUENCE [MRNA] (ISOFORMS 1 AND 2)</scope>
    <source>
        <tissue>Brain</tissue>
    </source>
</reference>
<reference key="2">
    <citation type="submission" date="1998-07" db="EMBL/GenBank/DDBJ databases">
        <title>In silico identification and molecular cloning of novel human protocadherin genes having identical 3' exons.</title>
        <authorList>
            <person name="Kools P.F.J."/>
            <person name="van Roy F."/>
        </authorList>
    </citation>
    <scope>NUCLEOTIDE SEQUENCE (ISOFORM 1)</scope>
</reference>
<reference key="3">
    <citation type="journal article" date="2004" name="Nature">
        <title>The DNA sequence and comparative analysis of human chromosome 5.</title>
        <authorList>
            <person name="Schmutz J."/>
            <person name="Martin J."/>
            <person name="Terry A."/>
            <person name="Couronne O."/>
            <person name="Grimwood J."/>
            <person name="Lowry S."/>
            <person name="Gordon L.A."/>
            <person name="Scott D."/>
            <person name="Xie G."/>
            <person name="Huang W."/>
            <person name="Hellsten U."/>
            <person name="Tran-Gyamfi M."/>
            <person name="She X."/>
            <person name="Prabhakar S."/>
            <person name="Aerts A."/>
            <person name="Altherr M."/>
            <person name="Bajorek E."/>
            <person name="Black S."/>
            <person name="Branscomb E."/>
            <person name="Caoile C."/>
            <person name="Challacombe J.F."/>
            <person name="Chan Y.M."/>
            <person name="Denys M."/>
            <person name="Detter J.C."/>
            <person name="Escobar J."/>
            <person name="Flowers D."/>
            <person name="Fotopulos D."/>
            <person name="Glavina T."/>
            <person name="Gomez M."/>
            <person name="Gonzales E."/>
            <person name="Goodstein D."/>
            <person name="Grigoriev I."/>
            <person name="Groza M."/>
            <person name="Hammon N."/>
            <person name="Hawkins T."/>
            <person name="Haydu L."/>
            <person name="Israni S."/>
            <person name="Jett J."/>
            <person name="Kadner K."/>
            <person name="Kimball H."/>
            <person name="Kobayashi A."/>
            <person name="Lopez F."/>
            <person name="Lou Y."/>
            <person name="Martinez D."/>
            <person name="Medina C."/>
            <person name="Morgan J."/>
            <person name="Nandkeshwar R."/>
            <person name="Noonan J.P."/>
            <person name="Pitluck S."/>
            <person name="Pollard M."/>
            <person name="Predki P."/>
            <person name="Priest J."/>
            <person name="Ramirez L."/>
            <person name="Retterer J."/>
            <person name="Rodriguez A."/>
            <person name="Rogers S."/>
            <person name="Salamov A."/>
            <person name="Salazar A."/>
            <person name="Thayer N."/>
            <person name="Tice H."/>
            <person name="Tsai M."/>
            <person name="Ustaszewska A."/>
            <person name="Vo N."/>
            <person name="Wheeler J."/>
            <person name="Wu K."/>
            <person name="Yang J."/>
            <person name="Dickson M."/>
            <person name="Cheng J.-F."/>
            <person name="Eichler E.E."/>
            <person name="Olsen A."/>
            <person name="Pennacchio L.A."/>
            <person name="Rokhsar D.S."/>
            <person name="Richardson P."/>
            <person name="Lucas S.M."/>
            <person name="Myers R.M."/>
            <person name="Rubin E.M."/>
        </authorList>
    </citation>
    <scope>NUCLEOTIDE SEQUENCE [LARGE SCALE GENOMIC DNA]</scope>
</reference>
<reference key="4">
    <citation type="submission" date="2005-09" db="EMBL/GenBank/DDBJ databases">
        <authorList>
            <person name="Mural R.J."/>
            <person name="Istrail S."/>
            <person name="Sutton G.G."/>
            <person name="Florea L."/>
            <person name="Halpern A.L."/>
            <person name="Mobarry C.M."/>
            <person name="Lippert R."/>
            <person name="Walenz B."/>
            <person name="Shatkay H."/>
            <person name="Dew I."/>
            <person name="Miller J.R."/>
            <person name="Flanigan M.J."/>
            <person name="Edwards N.J."/>
            <person name="Bolanos R."/>
            <person name="Fasulo D."/>
            <person name="Halldorsson B.V."/>
            <person name="Hannenhalli S."/>
            <person name="Turner R."/>
            <person name="Yooseph S."/>
            <person name="Lu F."/>
            <person name="Nusskern D.R."/>
            <person name="Shue B.C."/>
            <person name="Zheng X.H."/>
            <person name="Zhong F."/>
            <person name="Delcher A.L."/>
            <person name="Huson D.H."/>
            <person name="Kravitz S.A."/>
            <person name="Mouchard L."/>
            <person name="Reinert K."/>
            <person name="Remington K.A."/>
            <person name="Clark A.G."/>
            <person name="Waterman M.S."/>
            <person name="Eichler E.E."/>
            <person name="Adams M.D."/>
            <person name="Hunkapiller M.W."/>
            <person name="Myers E.W."/>
            <person name="Venter J.C."/>
        </authorList>
    </citation>
    <scope>NUCLEOTIDE SEQUENCE [LARGE SCALE GENOMIC DNA]</scope>
</reference>
<reference key="5">
    <citation type="journal article" date="2004" name="Genome Res.">
        <title>The status, quality, and expansion of the NIH full-length cDNA project: the Mammalian Gene Collection (MGC).</title>
        <authorList>
            <consortium name="The MGC Project Team"/>
        </authorList>
    </citation>
    <scope>NUCLEOTIDE SEQUENCE [LARGE SCALE MRNA] (ISOFORM 2)</scope>
    <source>
        <tissue>Brain</tissue>
    </source>
</reference>
<organism>
    <name type="scientific">Homo sapiens</name>
    <name type="common">Human</name>
    <dbReference type="NCBI Taxonomy" id="9606"/>
    <lineage>
        <taxon>Eukaryota</taxon>
        <taxon>Metazoa</taxon>
        <taxon>Chordata</taxon>
        <taxon>Craniata</taxon>
        <taxon>Vertebrata</taxon>
        <taxon>Euteleostomi</taxon>
        <taxon>Mammalia</taxon>
        <taxon>Eutheria</taxon>
        <taxon>Euarchontoglires</taxon>
        <taxon>Primates</taxon>
        <taxon>Haplorrhini</taxon>
        <taxon>Catarrhini</taxon>
        <taxon>Hominidae</taxon>
        <taxon>Homo</taxon>
    </lineage>
</organism>